<name>RL7_ACICJ</name>
<comment type="function">
    <text evidence="1">Forms part of the ribosomal stalk which helps the ribosome interact with GTP-bound translation factors. Is thus essential for accurate translation.</text>
</comment>
<comment type="subunit">
    <text evidence="1">Homodimer. Part of the ribosomal stalk of the 50S ribosomal subunit. Forms a multimeric L10(L12)X complex, where L10 forms an elongated spine to which 2 to 4 L12 dimers bind in a sequential fashion. Binds GTP-bound translation factors.</text>
</comment>
<comment type="similarity">
    <text evidence="1">Belongs to the bacterial ribosomal protein bL12 family.</text>
</comment>
<sequence length="127" mass="13105">MADLANLVEQLSSLTVLEAAELSKLLEEKWGVSAAAPVAVAAAAPAGGGAAAAPVEEKTEFNVILKSSGDKKINVIKEIRTITGLGLKEAKDLVEGAPKTVKEGVNKDEAEKIKKVLEEQGASVGIE</sequence>
<reference key="1">
    <citation type="submission" date="2007-05" db="EMBL/GenBank/DDBJ databases">
        <title>Complete sequence of chromosome of Acidiphilium cryptum JF-5.</title>
        <authorList>
            <consortium name="US DOE Joint Genome Institute"/>
            <person name="Copeland A."/>
            <person name="Lucas S."/>
            <person name="Lapidus A."/>
            <person name="Barry K."/>
            <person name="Detter J.C."/>
            <person name="Glavina del Rio T."/>
            <person name="Hammon N."/>
            <person name="Israni S."/>
            <person name="Dalin E."/>
            <person name="Tice H."/>
            <person name="Pitluck S."/>
            <person name="Sims D."/>
            <person name="Brettin T."/>
            <person name="Bruce D."/>
            <person name="Han C."/>
            <person name="Schmutz J."/>
            <person name="Larimer F."/>
            <person name="Land M."/>
            <person name="Hauser L."/>
            <person name="Kyrpides N."/>
            <person name="Kim E."/>
            <person name="Magnuson T."/>
            <person name="Richardson P."/>
        </authorList>
    </citation>
    <scope>NUCLEOTIDE SEQUENCE [LARGE SCALE GENOMIC DNA]</scope>
    <source>
        <strain>JF-5</strain>
    </source>
</reference>
<keyword id="KW-1185">Reference proteome</keyword>
<keyword id="KW-0687">Ribonucleoprotein</keyword>
<keyword id="KW-0689">Ribosomal protein</keyword>
<accession>A5FZX2</accession>
<organism>
    <name type="scientific">Acidiphilium cryptum (strain JF-5)</name>
    <dbReference type="NCBI Taxonomy" id="349163"/>
    <lineage>
        <taxon>Bacteria</taxon>
        <taxon>Pseudomonadati</taxon>
        <taxon>Pseudomonadota</taxon>
        <taxon>Alphaproteobacteria</taxon>
        <taxon>Acetobacterales</taxon>
        <taxon>Acidocellaceae</taxon>
        <taxon>Acidiphilium</taxon>
    </lineage>
</organism>
<protein>
    <recommendedName>
        <fullName evidence="1">Large ribosomal subunit protein bL12</fullName>
    </recommendedName>
    <alternativeName>
        <fullName evidence="2">50S ribosomal protein L7/L12</fullName>
    </alternativeName>
</protein>
<proteinExistence type="inferred from homology"/>
<evidence type="ECO:0000255" key="1">
    <source>
        <dbReference type="HAMAP-Rule" id="MF_00368"/>
    </source>
</evidence>
<evidence type="ECO:0000305" key="2"/>
<gene>
    <name evidence="1" type="primary">rplL</name>
    <name type="ordered locus">Acry_1953</name>
</gene>
<feature type="chain" id="PRO_1000006949" description="Large ribosomal subunit protein bL12">
    <location>
        <begin position="1"/>
        <end position="127"/>
    </location>
</feature>
<dbReference type="EMBL" id="CP000697">
    <property type="protein sequence ID" value="ABQ31154.1"/>
    <property type="molecule type" value="Genomic_DNA"/>
</dbReference>
<dbReference type="RefSeq" id="WP_012039723.1">
    <property type="nucleotide sequence ID" value="NC_009484.1"/>
</dbReference>
<dbReference type="SMR" id="A5FZX2"/>
<dbReference type="STRING" id="349163.Acry_1953"/>
<dbReference type="KEGG" id="acr:Acry_1953"/>
<dbReference type="eggNOG" id="COG0222">
    <property type="taxonomic scope" value="Bacteria"/>
</dbReference>
<dbReference type="HOGENOM" id="CLU_086499_3_0_5"/>
<dbReference type="Proteomes" id="UP000000245">
    <property type="component" value="Chromosome"/>
</dbReference>
<dbReference type="GO" id="GO:0022625">
    <property type="term" value="C:cytosolic large ribosomal subunit"/>
    <property type="evidence" value="ECO:0007669"/>
    <property type="project" value="TreeGrafter"/>
</dbReference>
<dbReference type="GO" id="GO:0003729">
    <property type="term" value="F:mRNA binding"/>
    <property type="evidence" value="ECO:0007669"/>
    <property type="project" value="TreeGrafter"/>
</dbReference>
<dbReference type="GO" id="GO:0003735">
    <property type="term" value="F:structural constituent of ribosome"/>
    <property type="evidence" value="ECO:0007669"/>
    <property type="project" value="InterPro"/>
</dbReference>
<dbReference type="GO" id="GO:0006412">
    <property type="term" value="P:translation"/>
    <property type="evidence" value="ECO:0007669"/>
    <property type="project" value="UniProtKB-UniRule"/>
</dbReference>
<dbReference type="CDD" id="cd00387">
    <property type="entry name" value="Ribosomal_L7_L12"/>
    <property type="match status" value="1"/>
</dbReference>
<dbReference type="FunFam" id="1.20.5.710:FF:000007">
    <property type="entry name" value="50S ribosomal protein L7/L12"/>
    <property type="match status" value="1"/>
</dbReference>
<dbReference type="FunFam" id="3.30.1390.10:FF:000001">
    <property type="entry name" value="50S ribosomal protein L7/L12"/>
    <property type="match status" value="1"/>
</dbReference>
<dbReference type="Gene3D" id="3.30.1390.10">
    <property type="match status" value="1"/>
</dbReference>
<dbReference type="Gene3D" id="1.20.5.710">
    <property type="entry name" value="Single helix bin"/>
    <property type="match status" value="1"/>
</dbReference>
<dbReference type="HAMAP" id="MF_00368">
    <property type="entry name" value="Ribosomal_bL12"/>
    <property type="match status" value="1"/>
</dbReference>
<dbReference type="InterPro" id="IPR000206">
    <property type="entry name" value="Ribosomal_bL12"/>
</dbReference>
<dbReference type="InterPro" id="IPR013823">
    <property type="entry name" value="Ribosomal_bL12_C"/>
</dbReference>
<dbReference type="InterPro" id="IPR014719">
    <property type="entry name" value="Ribosomal_bL12_C/ClpS-like"/>
</dbReference>
<dbReference type="InterPro" id="IPR008932">
    <property type="entry name" value="Ribosomal_bL12_oligo"/>
</dbReference>
<dbReference type="InterPro" id="IPR036235">
    <property type="entry name" value="Ribosomal_bL12_oligo_N_sf"/>
</dbReference>
<dbReference type="NCBIfam" id="TIGR00855">
    <property type="entry name" value="L12"/>
    <property type="match status" value="1"/>
</dbReference>
<dbReference type="PANTHER" id="PTHR45987">
    <property type="entry name" value="39S RIBOSOMAL PROTEIN L12"/>
    <property type="match status" value="1"/>
</dbReference>
<dbReference type="PANTHER" id="PTHR45987:SF4">
    <property type="entry name" value="LARGE RIBOSOMAL SUBUNIT PROTEIN BL12M"/>
    <property type="match status" value="1"/>
</dbReference>
<dbReference type="Pfam" id="PF00542">
    <property type="entry name" value="Ribosomal_L12"/>
    <property type="match status" value="1"/>
</dbReference>
<dbReference type="Pfam" id="PF16320">
    <property type="entry name" value="Ribosomal_L12_N"/>
    <property type="match status" value="1"/>
</dbReference>
<dbReference type="SUPFAM" id="SSF54736">
    <property type="entry name" value="ClpS-like"/>
    <property type="match status" value="1"/>
</dbReference>
<dbReference type="SUPFAM" id="SSF48300">
    <property type="entry name" value="Ribosomal protein L7/12, oligomerisation (N-terminal) domain"/>
    <property type="match status" value="1"/>
</dbReference>